<feature type="chain" id="PRO_0000353759" description="Cytochrome c biogenesis protein CcsA">
    <location>
        <begin position="1"/>
        <end position="317"/>
    </location>
</feature>
<feature type="transmembrane region" description="Helical" evidence="1">
    <location>
        <begin position="13"/>
        <end position="35"/>
    </location>
</feature>
<feature type="transmembrane region" description="Helical" evidence="1">
    <location>
        <begin position="44"/>
        <end position="64"/>
    </location>
</feature>
<feature type="transmembrane region" description="Helical" evidence="1">
    <location>
        <begin position="71"/>
        <end position="91"/>
    </location>
</feature>
<feature type="transmembrane region" description="Helical" evidence="1">
    <location>
        <begin position="143"/>
        <end position="163"/>
    </location>
</feature>
<feature type="transmembrane region" description="Helical" evidence="1">
    <location>
        <begin position="171"/>
        <end position="191"/>
    </location>
</feature>
<feature type="transmembrane region" description="Helical" evidence="1">
    <location>
        <begin position="225"/>
        <end position="245"/>
    </location>
</feature>
<feature type="transmembrane region" description="Helical" evidence="1">
    <location>
        <begin position="286"/>
        <end position="306"/>
    </location>
</feature>
<evidence type="ECO:0000255" key="1">
    <source>
        <dbReference type="HAMAP-Rule" id="MF_01391"/>
    </source>
</evidence>
<dbReference type="EMBL" id="EF380354">
    <property type="protein sequence ID" value="ABQ52569.1"/>
    <property type="molecule type" value="Genomic_DNA"/>
</dbReference>
<dbReference type="RefSeq" id="YP_001294320.1">
    <property type="nucleotide sequence ID" value="NC_009600.1"/>
</dbReference>
<dbReference type="SMR" id="A6MMZ4"/>
<dbReference type="GeneID" id="5236716"/>
<dbReference type="GO" id="GO:0009535">
    <property type="term" value="C:chloroplast thylakoid membrane"/>
    <property type="evidence" value="ECO:0007669"/>
    <property type="project" value="UniProtKB-SubCell"/>
</dbReference>
<dbReference type="GO" id="GO:0005886">
    <property type="term" value="C:plasma membrane"/>
    <property type="evidence" value="ECO:0007669"/>
    <property type="project" value="TreeGrafter"/>
</dbReference>
<dbReference type="GO" id="GO:0020037">
    <property type="term" value="F:heme binding"/>
    <property type="evidence" value="ECO:0007669"/>
    <property type="project" value="InterPro"/>
</dbReference>
<dbReference type="GO" id="GO:0017004">
    <property type="term" value="P:cytochrome complex assembly"/>
    <property type="evidence" value="ECO:0007669"/>
    <property type="project" value="UniProtKB-UniRule"/>
</dbReference>
<dbReference type="HAMAP" id="MF_01391">
    <property type="entry name" value="CytC_CcsA"/>
    <property type="match status" value="1"/>
</dbReference>
<dbReference type="InterPro" id="IPR002541">
    <property type="entry name" value="Cyt_c_assembly"/>
</dbReference>
<dbReference type="InterPro" id="IPR017562">
    <property type="entry name" value="Cyt_c_biogenesis_CcsA"/>
</dbReference>
<dbReference type="InterPro" id="IPR045062">
    <property type="entry name" value="Cyt_c_biogenesis_CcsA/CcmC"/>
</dbReference>
<dbReference type="NCBIfam" id="TIGR03144">
    <property type="entry name" value="cytochr_II_ccsB"/>
    <property type="match status" value="1"/>
</dbReference>
<dbReference type="PANTHER" id="PTHR30071:SF1">
    <property type="entry name" value="CYTOCHROME B_B6 PROTEIN-RELATED"/>
    <property type="match status" value="1"/>
</dbReference>
<dbReference type="PANTHER" id="PTHR30071">
    <property type="entry name" value="HEME EXPORTER PROTEIN C"/>
    <property type="match status" value="1"/>
</dbReference>
<dbReference type="Pfam" id="PF01578">
    <property type="entry name" value="Cytochrom_C_asm"/>
    <property type="match status" value="1"/>
</dbReference>
<proteinExistence type="inferred from homology"/>
<reference key="1">
    <citation type="journal article" date="2007" name="Mol. Phylogenet. Evol.">
        <title>Phylogenetic and evolutionary implications of complete chloroplast genome sequences of four early-diverging angiosperms: Buxus (Buxaceae), Chloranthus (Chloranthaceae), Dioscorea (Dioscoreaceae), and Illicium (Schisandraceae).</title>
        <authorList>
            <person name="Hansen D.R."/>
            <person name="Dastidar S.G."/>
            <person name="Cai Z."/>
            <person name="Penaflor C."/>
            <person name="Kuehl J.V."/>
            <person name="Boore J.L."/>
            <person name="Jansen R.K."/>
        </authorList>
    </citation>
    <scope>NUCLEOTIDE SEQUENCE [LARGE SCALE GENOMIC DNA]</scope>
</reference>
<comment type="function">
    <text evidence="1">Required during biogenesis of c-type cytochromes (cytochrome c6 and cytochrome f) at the step of heme attachment.</text>
</comment>
<comment type="subunit">
    <text evidence="1">May interact with Ccs1.</text>
</comment>
<comment type="subcellular location">
    <subcellularLocation>
        <location evidence="1">Plastid</location>
        <location evidence="1">Chloroplast thylakoid membrane</location>
        <topology evidence="1">Multi-pass membrane protein</topology>
    </subcellularLocation>
</comment>
<comment type="similarity">
    <text evidence="1">Belongs to the CcmF/CycK/Ccl1/NrfE/CcsA family.</text>
</comment>
<name>CCSA_ILLOL</name>
<gene>
    <name evidence="1" type="primary">ccsA</name>
</gene>
<accession>A6MMZ4</accession>
<geneLocation type="chloroplast"/>
<protein>
    <recommendedName>
        <fullName evidence="1">Cytochrome c biogenesis protein CcsA</fullName>
    </recommendedName>
</protein>
<keyword id="KW-0150">Chloroplast</keyword>
<keyword id="KW-0201">Cytochrome c-type biogenesis</keyword>
<keyword id="KW-0472">Membrane</keyword>
<keyword id="KW-0934">Plastid</keyword>
<keyword id="KW-0793">Thylakoid</keyword>
<keyword id="KW-0812">Transmembrane</keyword>
<keyword id="KW-1133">Transmembrane helix</keyword>
<organism>
    <name type="scientific">Illicium oligandrum</name>
    <name type="common">Star anise</name>
    <dbReference type="NCBI Taxonomy" id="145286"/>
    <lineage>
        <taxon>Eukaryota</taxon>
        <taxon>Viridiplantae</taxon>
        <taxon>Streptophyta</taxon>
        <taxon>Embryophyta</taxon>
        <taxon>Tracheophyta</taxon>
        <taxon>Spermatophyta</taxon>
        <taxon>Magnoliopsida</taxon>
        <taxon>Austrobaileyales</taxon>
        <taxon>Schisandraceae</taxon>
        <taxon>Illicium</taxon>
    </lineage>
</organism>
<sequence>MIFVILEHILTHISFSIIAIVITTHLMTLLVHEIVGLCDSSEKGMIATFFCITGLLVTRWIYSGHFPLNDLYESLMFLSWSFSLILMVPYFKNHKNHFSTITAPSAICTQSFATSGLSTEIHQSEILVPALQSHWLMMHVSMMLLSYAALLCGSLLSIALLVITFRKNIDMIGFTNHLLIWPFSFGEIKYLNEKRSLLKNTSFLLFRNYHRYQLTQRLDHWSYRVIGLGFTFSTIGILSGAVWANEAWGSYWNWDPKETWAFITWTISAIYSHTRTNKSLQGMNSAIVASMGFLIIWICYFGVNLLGIGLHSYGSFT</sequence>